<accession>P06796</accession>
<accession>Q9D1U2</accession>
<evidence type="ECO:0000250" key="1"/>
<evidence type="ECO:0000250" key="2">
    <source>
        <dbReference type="UniProtKB" id="P02668"/>
    </source>
</evidence>
<evidence type="ECO:0000250" key="3">
    <source>
        <dbReference type="UniProtKB" id="P02670"/>
    </source>
</evidence>
<evidence type="ECO:0000255" key="4"/>
<evidence type="ECO:0000305" key="5"/>
<comment type="function">
    <text>Kappa-casein stabilizes micelle formation, preventing casein precipitation in milk.</text>
</comment>
<comment type="subcellular location">
    <subcellularLocation>
        <location>Secreted</location>
    </subcellularLocation>
</comment>
<comment type="tissue specificity">
    <text>Mammary gland specific. Secreted in milk.</text>
</comment>
<comment type="similarity">
    <text evidence="5">Belongs to the kappa-casein family.</text>
</comment>
<organism>
    <name type="scientific">Mus musculus</name>
    <name type="common">Mouse</name>
    <dbReference type="NCBI Taxonomy" id="10090"/>
    <lineage>
        <taxon>Eukaryota</taxon>
        <taxon>Metazoa</taxon>
        <taxon>Chordata</taxon>
        <taxon>Craniata</taxon>
        <taxon>Vertebrata</taxon>
        <taxon>Euteleostomi</taxon>
        <taxon>Mammalia</taxon>
        <taxon>Eutheria</taxon>
        <taxon>Euarchontoglires</taxon>
        <taxon>Glires</taxon>
        <taxon>Rodentia</taxon>
        <taxon>Myomorpha</taxon>
        <taxon>Muroidea</taxon>
        <taxon>Muridae</taxon>
        <taxon>Murinae</taxon>
        <taxon>Mus</taxon>
        <taxon>Mus</taxon>
    </lineage>
</organism>
<sequence>MMRNFIVVVNILALTLPFLAAEIQNPDSNCRGEKNDIVYDEQRVLYTPVRSVLNFNQYEPNYYHYRPSLPATASPYMYYPLVVRLLLLRSPAPISKWQSMPNFPQSAGVPYAIPNPSFLAMPTNENQDNTAIPTIDPITPIVSTPVPTMESIVNTVANPEASTVSINTPETTTVPVSSTAA</sequence>
<protein>
    <recommendedName>
        <fullName>Kappa-casein</fullName>
    </recommendedName>
</protein>
<reference key="1">
    <citation type="journal article" date="1985" name="DNA">
        <title>Molecular cloning of mouse mammary gland kappa-casein: comparison with rat kappa-casein and rat and human gamma-fibrinogen.</title>
        <authorList>
            <person name="Thompson M.D."/>
            <person name="Dave J.R."/>
            <person name="Nakhasi H.L."/>
        </authorList>
    </citation>
    <scope>NUCLEOTIDE SEQUENCE [MRNA]</scope>
</reference>
<reference key="2">
    <citation type="journal article" date="2005" name="Science">
        <title>The transcriptional landscape of the mammalian genome.</title>
        <authorList>
            <person name="Carninci P."/>
            <person name="Kasukawa T."/>
            <person name="Katayama S."/>
            <person name="Gough J."/>
            <person name="Frith M.C."/>
            <person name="Maeda N."/>
            <person name="Oyama R."/>
            <person name="Ravasi T."/>
            <person name="Lenhard B."/>
            <person name="Wells C."/>
            <person name="Kodzius R."/>
            <person name="Shimokawa K."/>
            <person name="Bajic V.B."/>
            <person name="Brenner S.E."/>
            <person name="Batalov S."/>
            <person name="Forrest A.R."/>
            <person name="Zavolan M."/>
            <person name="Davis M.J."/>
            <person name="Wilming L.G."/>
            <person name="Aidinis V."/>
            <person name="Allen J.E."/>
            <person name="Ambesi-Impiombato A."/>
            <person name="Apweiler R."/>
            <person name="Aturaliya R.N."/>
            <person name="Bailey T.L."/>
            <person name="Bansal M."/>
            <person name="Baxter L."/>
            <person name="Beisel K.W."/>
            <person name="Bersano T."/>
            <person name="Bono H."/>
            <person name="Chalk A.M."/>
            <person name="Chiu K.P."/>
            <person name="Choudhary V."/>
            <person name="Christoffels A."/>
            <person name="Clutterbuck D.R."/>
            <person name="Crowe M.L."/>
            <person name="Dalla E."/>
            <person name="Dalrymple B.P."/>
            <person name="de Bono B."/>
            <person name="Della Gatta G."/>
            <person name="di Bernardo D."/>
            <person name="Down T."/>
            <person name="Engstrom P."/>
            <person name="Fagiolini M."/>
            <person name="Faulkner G."/>
            <person name="Fletcher C.F."/>
            <person name="Fukushima T."/>
            <person name="Furuno M."/>
            <person name="Futaki S."/>
            <person name="Gariboldi M."/>
            <person name="Georgii-Hemming P."/>
            <person name="Gingeras T.R."/>
            <person name="Gojobori T."/>
            <person name="Green R.E."/>
            <person name="Gustincich S."/>
            <person name="Harbers M."/>
            <person name="Hayashi Y."/>
            <person name="Hensch T.K."/>
            <person name="Hirokawa N."/>
            <person name="Hill D."/>
            <person name="Huminiecki L."/>
            <person name="Iacono M."/>
            <person name="Ikeo K."/>
            <person name="Iwama A."/>
            <person name="Ishikawa T."/>
            <person name="Jakt M."/>
            <person name="Kanapin A."/>
            <person name="Katoh M."/>
            <person name="Kawasawa Y."/>
            <person name="Kelso J."/>
            <person name="Kitamura H."/>
            <person name="Kitano H."/>
            <person name="Kollias G."/>
            <person name="Krishnan S.P."/>
            <person name="Kruger A."/>
            <person name="Kummerfeld S.K."/>
            <person name="Kurochkin I.V."/>
            <person name="Lareau L.F."/>
            <person name="Lazarevic D."/>
            <person name="Lipovich L."/>
            <person name="Liu J."/>
            <person name="Liuni S."/>
            <person name="McWilliam S."/>
            <person name="Madan Babu M."/>
            <person name="Madera M."/>
            <person name="Marchionni L."/>
            <person name="Matsuda H."/>
            <person name="Matsuzawa S."/>
            <person name="Miki H."/>
            <person name="Mignone F."/>
            <person name="Miyake S."/>
            <person name="Morris K."/>
            <person name="Mottagui-Tabar S."/>
            <person name="Mulder N."/>
            <person name="Nakano N."/>
            <person name="Nakauchi H."/>
            <person name="Ng P."/>
            <person name="Nilsson R."/>
            <person name="Nishiguchi S."/>
            <person name="Nishikawa S."/>
            <person name="Nori F."/>
            <person name="Ohara O."/>
            <person name="Okazaki Y."/>
            <person name="Orlando V."/>
            <person name="Pang K.C."/>
            <person name="Pavan W.J."/>
            <person name="Pavesi G."/>
            <person name="Pesole G."/>
            <person name="Petrovsky N."/>
            <person name="Piazza S."/>
            <person name="Reed J."/>
            <person name="Reid J.F."/>
            <person name="Ring B.Z."/>
            <person name="Ringwald M."/>
            <person name="Rost B."/>
            <person name="Ruan Y."/>
            <person name="Salzberg S.L."/>
            <person name="Sandelin A."/>
            <person name="Schneider C."/>
            <person name="Schoenbach C."/>
            <person name="Sekiguchi K."/>
            <person name="Semple C.A."/>
            <person name="Seno S."/>
            <person name="Sessa L."/>
            <person name="Sheng Y."/>
            <person name="Shibata Y."/>
            <person name="Shimada H."/>
            <person name="Shimada K."/>
            <person name="Silva D."/>
            <person name="Sinclair B."/>
            <person name="Sperling S."/>
            <person name="Stupka E."/>
            <person name="Sugiura K."/>
            <person name="Sultana R."/>
            <person name="Takenaka Y."/>
            <person name="Taki K."/>
            <person name="Tammoja K."/>
            <person name="Tan S.L."/>
            <person name="Tang S."/>
            <person name="Taylor M.S."/>
            <person name="Tegner J."/>
            <person name="Teichmann S.A."/>
            <person name="Ueda H.R."/>
            <person name="van Nimwegen E."/>
            <person name="Verardo R."/>
            <person name="Wei C.L."/>
            <person name="Yagi K."/>
            <person name="Yamanishi H."/>
            <person name="Zabarovsky E."/>
            <person name="Zhu S."/>
            <person name="Zimmer A."/>
            <person name="Hide W."/>
            <person name="Bult C."/>
            <person name="Grimmond S.M."/>
            <person name="Teasdale R.D."/>
            <person name="Liu E.T."/>
            <person name="Brusic V."/>
            <person name="Quackenbush J."/>
            <person name="Wahlestedt C."/>
            <person name="Mattick J.S."/>
            <person name="Hume D.A."/>
            <person name="Kai C."/>
            <person name="Sasaki D."/>
            <person name="Tomaru Y."/>
            <person name="Fukuda S."/>
            <person name="Kanamori-Katayama M."/>
            <person name="Suzuki M."/>
            <person name="Aoki J."/>
            <person name="Arakawa T."/>
            <person name="Iida J."/>
            <person name="Imamura K."/>
            <person name="Itoh M."/>
            <person name="Kato T."/>
            <person name="Kawaji H."/>
            <person name="Kawagashira N."/>
            <person name="Kawashima T."/>
            <person name="Kojima M."/>
            <person name="Kondo S."/>
            <person name="Konno H."/>
            <person name="Nakano K."/>
            <person name="Ninomiya N."/>
            <person name="Nishio T."/>
            <person name="Okada M."/>
            <person name="Plessy C."/>
            <person name="Shibata K."/>
            <person name="Shiraki T."/>
            <person name="Suzuki S."/>
            <person name="Tagami M."/>
            <person name="Waki K."/>
            <person name="Watahiki A."/>
            <person name="Okamura-Oho Y."/>
            <person name="Suzuki H."/>
            <person name="Kawai J."/>
            <person name="Hayashizaki Y."/>
        </authorList>
    </citation>
    <scope>NUCLEOTIDE SEQUENCE [LARGE SCALE MRNA]</scope>
    <source>
        <strain>C57BL/6J</strain>
        <tissue>Mammary gland</tissue>
    </source>
</reference>
<reference key="3">
    <citation type="journal article" date="2009" name="PLoS Biol.">
        <title>Lineage-specific biology revealed by a finished genome assembly of the mouse.</title>
        <authorList>
            <person name="Church D.M."/>
            <person name="Goodstadt L."/>
            <person name="Hillier L.W."/>
            <person name="Zody M.C."/>
            <person name="Goldstein S."/>
            <person name="She X."/>
            <person name="Bult C.J."/>
            <person name="Agarwala R."/>
            <person name="Cherry J.L."/>
            <person name="DiCuccio M."/>
            <person name="Hlavina W."/>
            <person name="Kapustin Y."/>
            <person name="Meric P."/>
            <person name="Maglott D."/>
            <person name="Birtle Z."/>
            <person name="Marques A.C."/>
            <person name="Graves T."/>
            <person name="Zhou S."/>
            <person name="Teague B."/>
            <person name="Potamousis K."/>
            <person name="Churas C."/>
            <person name="Place M."/>
            <person name="Herschleb J."/>
            <person name="Runnheim R."/>
            <person name="Forrest D."/>
            <person name="Amos-Landgraf J."/>
            <person name="Schwartz D.C."/>
            <person name="Cheng Z."/>
            <person name="Lindblad-Toh K."/>
            <person name="Eichler E.E."/>
            <person name="Ponting C.P."/>
        </authorList>
    </citation>
    <scope>NUCLEOTIDE SEQUENCE [LARGE SCALE GENOMIC DNA]</scope>
    <source>
        <strain>C57BL/6J</strain>
    </source>
</reference>
<reference key="4">
    <citation type="journal article" date="2004" name="Genome Res.">
        <title>The status, quality, and expansion of the NIH full-length cDNA project: the Mammalian Gene Collection (MGC).</title>
        <authorList>
            <consortium name="The MGC Project Team"/>
        </authorList>
    </citation>
    <scope>NUCLEOTIDE SEQUENCE [LARGE SCALE MRNA]</scope>
    <source>
        <strain>FVB/N</strain>
        <tissue>Mammary tumor</tissue>
    </source>
</reference>
<name>CASK_MOUSE</name>
<gene>
    <name type="primary">Csn3</name>
    <name type="synonym">Csn10</name>
    <name type="synonym">Csnk</name>
</gene>
<dbReference type="EMBL" id="M10114">
    <property type="protein sequence ID" value="AAA37370.1"/>
    <property type="molecule type" value="mRNA"/>
</dbReference>
<dbReference type="EMBL" id="AK021350">
    <property type="protein sequence ID" value="BAB32382.1"/>
    <property type="molecule type" value="mRNA"/>
</dbReference>
<dbReference type="EMBL" id="AK085710">
    <property type="protein sequence ID" value="BAC39516.1"/>
    <property type="molecule type" value="mRNA"/>
</dbReference>
<dbReference type="EMBL" id="AK142607">
    <property type="protein sequence ID" value="BAE25129.1"/>
    <property type="molecule type" value="mRNA"/>
</dbReference>
<dbReference type="EMBL" id="AK142673">
    <property type="protein sequence ID" value="BAE25155.1"/>
    <property type="molecule type" value="mRNA"/>
</dbReference>
<dbReference type="EMBL" id="AK164788">
    <property type="protein sequence ID" value="BAE37916.1"/>
    <property type="molecule type" value="mRNA"/>
</dbReference>
<dbReference type="EMBL" id="AC022298">
    <property type="status" value="NOT_ANNOTATED_CDS"/>
    <property type="molecule type" value="Genomic_DNA"/>
</dbReference>
<dbReference type="EMBL" id="BC049949">
    <property type="protein sequence ID" value="AAH49949.1"/>
    <property type="molecule type" value="mRNA"/>
</dbReference>
<dbReference type="EMBL" id="BC050269">
    <property type="protein sequence ID" value="AAH50269.1"/>
    <property type="molecule type" value="mRNA"/>
</dbReference>
<dbReference type="CCDS" id="CCDS19396.1"/>
<dbReference type="PIR" id="A05080">
    <property type="entry name" value="A05080"/>
</dbReference>
<dbReference type="RefSeq" id="NP_001343499.1">
    <property type="nucleotide sequence ID" value="NM_001356570.1"/>
</dbReference>
<dbReference type="RefSeq" id="NP_031812.2">
    <property type="nucleotide sequence ID" value="NM_007786.5"/>
</dbReference>
<dbReference type="RefSeq" id="XP_006534828.1">
    <property type="nucleotide sequence ID" value="XM_006534765.2"/>
</dbReference>
<dbReference type="BioGRID" id="198941">
    <property type="interactions" value="1"/>
</dbReference>
<dbReference type="FunCoup" id="P06796">
    <property type="interactions" value="281"/>
</dbReference>
<dbReference type="STRING" id="10090.ENSMUSP00000108896"/>
<dbReference type="GlyCosmos" id="P06796">
    <property type="glycosylation" value="4 sites, No reported glycans"/>
</dbReference>
<dbReference type="GlyGen" id="P06796">
    <property type="glycosylation" value="4 sites"/>
</dbReference>
<dbReference type="PhosphoSitePlus" id="P06796"/>
<dbReference type="CPTAC" id="non-CPTAC-3317"/>
<dbReference type="PaxDb" id="10090-ENSMUSP00000108896"/>
<dbReference type="PeptideAtlas" id="P06796"/>
<dbReference type="Antibodypedia" id="24320">
    <property type="antibodies" value="92 antibodies from 20 providers"/>
</dbReference>
<dbReference type="DNASU" id="12994"/>
<dbReference type="Ensembl" id="ENSMUST00000001667.13">
    <property type="protein sequence ID" value="ENSMUSP00000001667.7"/>
    <property type="gene ID" value="ENSMUSG00000001622.16"/>
</dbReference>
<dbReference type="Ensembl" id="ENSMUST00000113267.8">
    <property type="protein sequence ID" value="ENSMUSP00000108892.2"/>
    <property type="gene ID" value="ENSMUSG00000001622.16"/>
</dbReference>
<dbReference type="Ensembl" id="ENSMUST00000113271.3">
    <property type="protein sequence ID" value="ENSMUSP00000108896.3"/>
    <property type="gene ID" value="ENSMUSG00000001622.16"/>
</dbReference>
<dbReference type="GeneID" id="12994"/>
<dbReference type="KEGG" id="mmu:12994"/>
<dbReference type="UCSC" id="uc008xzg.1">
    <property type="organism name" value="mouse"/>
</dbReference>
<dbReference type="AGR" id="MGI:107461"/>
<dbReference type="CTD" id="1448"/>
<dbReference type="MGI" id="MGI:107461">
    <property type="gene designation" value="Csn3"/>
</dbReference>
<dbReference type="VEuPathDB" id="HostDB:ENSMUSG00000001622"/>
<dbReference type="eggNOG" id="ENOG502TM2T">
    <property type="taxonomic scope" value="Eukaryota"/>
</dbReference>
<dbReference type="GeneTree" id="ENSGT00390000009184"/>
<dbReference type="HOGENOM" id="CLU_103388_0_0_1"/>
<dbReference type="InParanoid" id="P06796"/>
<dbReference type="OMA" id="YYVPNSY"/>
<dbReference type="OrthoDB" id="9836334at2759"/>
<dbReference type="TreeFam" id="TF338369"/>
<dbReference type="Reactome" id="R-MMU-5223345">
    <property type="pathway name" value="Miscellaneous transport and binding events"/>
</dbReference>
<dbReference type="BioGRID-ORCS" id="12994">
    <property type="hits" value="2 hits in 76 CRISPR screens"/>
</dbReference>
<dbReference type="ChiTaRS" id="Csn3">
    <property type="organism name" value="mouse"/>
</dbReference>
<dbReference type="PRO" id="PR:P06796"/>
<dbReference type="Proteomes" id="UP000000589">
    <property type="component" value="Chromosome 5"/>
</dbReference>
<dbReference type="RNAct" id="P06796">
    <property type="molecule type" value="protein"/>
</dbReference>
<dbReference type="Bgee" id="ENSMUSG00000001622">
    <property type="expression patterns" value="Expressed in thoracic mammary gland and 63 other cell types or tissues"/>
</dbReference>
<dbReference type="GO" id="GO:0005576">
    <property type="term" value="C:extracellular region"/>
    <property type="evidence" value="ECO:0007669"/>
    <property type="project" value="UniProtKB-SubCell"/>
</dbReference>
<dbReference type="GO" id="GO:0007595">
    <property type="term" value="P:lactation"/>
    <property type="evidence" value="ECO:0000315"/>
    <property type="project" value="MGI"/>
</dbReference>
<dbReference type="InterPro" id="IPR000117">
    <property type="entry name" value="Casein_kappa"/>
</dbReference>
<dbReference type="PANTHER" id="PTHR11470">
    <property type="entry name" value="KAPPA CASEIN"/>
    <property type="match status" value="1"/>
</dbReference>
<dbReference type="PANTHER" id="PTHR11470:SF2">
    <property type="entry name" value="KAPPA-CASEIN"/>
    <property type="match status" value="1"/>
</dbReference>
<dbReference type="Pfam" id="PF00997">
    <property type="entry name" value="Casein_kappa"/>
    <property type="match status" value="1"/>
</dbReference>
<dbReference type="PIRSF" id="PIRSF002374">
    <property type="entry name" value="Casein_kappa"/>
    <property type="match status" value="1"/>
</dbReference>
<feature type="signal peptide" evidence="1">
    <location>
        <begin position="1"/>
        <end position="21"/>
    </location>
</feature>
<feature type="chain" id="PRO_0000004499" description="Kappa-casein">
    <location>
        <begin position="22"/>
        <end position="181"/>
    </location>
</feature>
<feature type="site" description="Cleavage; by chymosin/rennin">
    <location>
        <begin position="118"/>
        <end position="119"/>
    </location>
</feature>
<feature type="modified residue" description="Phosphothreonine" evidence="4">
    <location>
        <position position="123"/>
    </location>
</feature>
<feature type="modified residue" description="Phosphoserine; alternate" evidence="2">
    <location>
        <position position="162"/>
    </location>
</feature>
<feature type="modified residue" description="Phosphoserine" evidence="3">
    <location>
        <position position="178"/>
    </location>
</feature>
<feature type="glycosylation site" description="O-linked (GalNAc...) threonine" evidence="2">
    <location>
        <position position="134"/>
    </location>
</feature>
<feature type="glycosylation site" description="O-linked (GalNAc...) threonine" evidence="2">
    <location>
        <position position="144"/>
    </location>
</feature>
<feature type="glycosylation site" description="O-linked (GalNAc...) threonine" evidence="2">
    <location>
        <position position="155"/>
    </location>
</feature>
<feature type="glycosylation site" description="O-linked (GalNAc...) serine; alternate" evidence="2">
    <location>
        <position position="162"/>
    </location>
</feature>
<feature type="sequence conflict" description="In Ref. 1; AAA37370." evidence="5" ref="1">
    <original>V</original>
    <variation>M</variation>
    <location>
        <position position="9"/>
    </location>
</feature>
<keyword id="KW-0325">Glycoprotein</keyword>
<keyword id="KW-0494">Milk protein</keyword>
<keyword id="KW-0597">Phosphoprotein</keyword>
<keyword id="KW-1185">Reference proteome</keyword>
<keyword id="KW-0964">Secreted</keyword>
<keyword id="KW-0732">Signal</keyword>
<proteinExistence type="evidence at transcript level"/>